<comment type="function">
    <text evidence="1">Catalyzes the reversible isomerization of glucose-6-phosphate to fructose-6-phosphate.</text>
</comment>
<comment type="catalytic activity">
    <reaction evidence="1">
        <text>alpha-D-glucose 6-phosphate = beta-D-fructose 6-phosphate</text>
        <dbReference type="Rhea" id="RHEA:11816"/>
        <dbReference type="ChEBI" id="CHEBI:57634"/>
        <dbReference type="ChEBI" id="CHEBI:58225"/>
        <dbReference type="EC" id="5.3.1.9"/>
    </reaction>
</comment>
<comment type="pathway">
    <text evidence="1">Carbohydrate biosynthesis; gluconeogenesis.</text>
</comment>
<comment type="pathway">
    <text evidence="1">Carbohydrate degradation; glycolysis; D-glyceraldehyde 3-phosphate and glycerone phosphate from D-glucose: step 2/4.</text>
</comment>
<comment type="subcellular location">
    <subcellularLocation>
        <location evidence="1">Cytoplasm</location>
    </subcellularLocation>
</comment>
<comment type="similarity">
    <text evidence="1">Belongs to the GPI family.</text>
</comment>
<reference key="1">
    <citation type="journal article" date="2007" name="PLoS Genet.">
        <title>Patterns and implications of gene gain and loss in the evolution of Prochlorococcus.</title>
        <authorList>
            <person name="Kettler G.C."/>
            <person name="Martiny A.C."/>
            <person name="Huang K."/>
            <person name="Zucker J."/>
            <person name="Coleman M.L."/>
            <person name="Rodrigue S."/>
            <person name="Chen F."/>
            <person name="Lapidus A."/>
            <person name="Ferriera S."/>
            <person name="Johnson J."/>
            <person name="Steglich C."/>
            <person name="Church G.M."/>
            <person name="Richardson P."/>
            <person name="Chisholm S.W."/>
        </authorList>
    </citation>
    <scope>NUCLEOTIDE SEQUENCE [LARGE SCALE GENOMIC DNA]</scope>
    <source>
        <strain>MIT 9515</strain>
    </source>
</reference>
<accession>A2BWL8</accession>
<feature type="chain" id="PRO_1000013998" description="Glucose-6-phosphate isomerase">
    <location>
        <begin position="1"/>
        <end position="527"/>
    </location>
</feature>
<feature type="active site" description="Proton donor" evidence="1">
    <location>
        <position position="323"/>
    </location>
</feature>
<feature type="active site" evidence="1">
    <location>
        <position position="352"/>
    </location>
</feature>
<feature type="active site" evidence="1">
    <location>
        <position position="454"/>
    </location>
</feature>
<proteinExistence type="inferred from homology"/>
<keyword id="KW-0963">Cytoplasm</keyword>
<keyword id="KW-0312">Gluconeogenesis</keyword>
<keyword id="KW-0324">Glycolysis</keyword>
<keyword id="KW-0413">Isomerase</keyword>
<evidence type="ECO:0000255" key="1">
    <source>
        <dbReference type="HAMAP-Rule" id="MF_00473"/>
    </source>
</evidence>
<protein>
    <recommendedName>
        <fullName evidence="1">Glucose-6-phosphate isomerase</fullName>
        <shortName evidence="1">GPI</shortName>
        <ecNumber evidence="1">5.3.1.9</ecNumber>
    </recommendedName>
    <alternativeName>
        <fullName evidence="1">Phosphoglucose isomerase</fullName>
        <shortName evidence="1">PGI</shortName>
    </alternativeName>
    <alternativeName>
        <fullName evidence="1">Phosphohexose isomerase</fullName>
        <shortName evidence="1">PHI</shortName>
    </alternativeName>
</protein>
<sequence length="527" mass="59581">MNNDFNSWDKYCDYLWYDQKINIWLDISKINFSYDQISSLENKFIGVFSSIKELEAGAISNIDEKRQVGHYWLRNPSIAPNTFIKDEIIKDIRDISEFGDKVLKGIIKNNKNQTYTDVLWIGIGGSGLGPLLITEALQENSVGLNFSYIDNIDPFLISEKLDELSDKLPTTLFVVVSKSGGTPEPKIAMNIIKRHVEDKNILWNSNAIAITMKNSQLYKKAKLENWLKIFNLPDWVGGRTSITSSVGLLPLALINQDVSEFIRGASIMDELTRITNIKDNPAALLSSAWFFSGNGIGKRDMVVLPYRDRLQVFSKYLQQLVMESLGKKFNRKGKIVHQGISVFGNKGSTDQHAYVQQLRDGIDNFFCVFIELLDIPDDNKYFGSENPKEFLSGFLQGTRSALSNENRQSITITLDKLNCLTLGALIALFERAVSFYAELVDINAYDQPGVEAGKKAAAEILEYQKKVTELLNNGEEFSIKKITSLIENSTSEPIFFIIRQMCFGNDDYLIKGDWSNPISIIIKKNSK</sequence>
<gene>
    <name evidence="1" type="primary">pgi</name>
    <name type="ordered locus">P9515_09721</name>
</gene>
<name>G6PI_PROM5</name>
<organism>
    <name type="scientific">Prochlorococcus marinus (strain MIT 9515)</name>
    <dbReference type="NCBI Taxonomy" id="167542"/>
    <lineage>
        <taxon>Bacteria</taxon>
        <taxon>Bacillati</taxon>
        <taxon>Cyanobacteriota</taxon>
        <taxon>Cyanophyceae</taxon>
        <taxon>Synechococcales</taxon>
        <taxon>Prochlorococcaceae</taxon>
        <taxon>Prochlorococcus</taxon>
    </lineage>
</organism>
<dbReference type="EC" id="5.3.1.9" evidence="1"/>
<dbReference type="EMBL" id="CP000552">
    <property type="protein sequence ID" value="ABM72179.1"/>
    <property type="molecule type" value="Genomic_DNA"/>
</dbReference>
<dbReference type="RefSeq" id="WP_011820281.1">
    <property type="nucleotide sequence ID" value="NC_008817.1"/>
</dbReference>
<dbReference type="SMR" id="A2BWL8"/>
<dbReference type="STRING" id="167542.P9515_09721"/>
<dbReference type="GeneID" id="60202118"/>
<dbReference type="KEGG" id="pmc:P9515_09721"/>
<dbReference type="eggNOG" id="COG0166">
    <property type="taxonomic scope" value="Bacteria"/>
</dbReference>
<dbReference type="HOGENOM" id="CLU_033288_0_0_3"/>
<dbReference type="OrthoDB" id="140919at2"/>
<dbReference type="UniPathway" id="UPA00109">
    <property type="reaction ID" value="UER00181"/>
</dbReference>
<dbReference type="UniPathway" id="UPA00138"/>
<dbReference type="Proteomes" id="UP000001589">
    <property type="component" value="Chromosome"/>
</dbReference>
<dbReference type="GO" id="GO:0005829">
    <property type="term" value="C:cytosol"/>
    <property type="evidence" value="ECO:0007669"/>
    <property type="project" value="TreeGrafter"/>
</dbReference>
<dbReference type="GO" id="GO:0097367">
    <property type="term" value="F:carbohydrate derivative binding"/>
    <property type="evidence" value="ECO:0007669"/>
    <property type="project" value="InterPro"/>
</dbReference>
<dbReference type="GO" id="GO:0004347">
    <property type="term" value="F:glucose-6-phosphate isomerase activity"/>
    <property type="evidence" value="ECO:0007669"/>
    <property type="project" value="UniProtKB-UniRule"/>
</dbReference>
<dbReference type="GO" id="GO:0048029">
    <property type="term" value="F:monosaccharide binding"/>
    <property type="evidence" value="ECO:0007669"/>
    <property type="project" value="TreeGrafter"/>
</dbReference>
<dbReference type="GO" id="GO:0006094">
    <property type="term" value="P:gluconeogenesis"/>
    <property type="evidence" value="ECO:0007669"/>
    <property type="project" value="UniProtKB-UniRule"/>
</dbReference>
<dbReference type="GO" id="GO:0051156">
    <property type="term" value="P:glucose 6-phosphate metabolic process"/>
    <property type="evidence" value="ECO:0007669"/>
    <property type="project" value="TreeGrafter"/>
</dbReference>
<dbReference type="GO" id="GO:0006096">
    <property type="term" value="P:glycolytic process"/>
    <property type="evidence" value="ECO:0007669"/>
    <property type="project" value="UniProtKB-UniRule"/>
</dbReference>
<dbReference type="CDD" id="cd05015">
    <property type="entry name" value="SIS_PGI_1"/>
    <property type="match status" value="1"/>
</dbReference>
<dbReference type="CDD" id="cd05016">
    <property type="entry name" value="SIS_PGI_2"/>
    <property type="match status" value="1"/>
</dbReference>
<dbReference type="FunFam" id="3.40.50.10490:FF:000021">
    <property type="entry name" value="Glucose-6-phosphate isomerase"/>
    <property type="match status" value="1"/>
</dbReference>
<dbReference type="Gene3D" id="3.40.50.10490">
    <property type="entry name" value="Glucose-6-phosphate isomerase like protein, domain 1"/>
    <property type="match status" value="2"/>
</dbReference>
<dbReference type="HAMAP" id="MF_00473">
    <property type="entry name" value="G6P_isomerase"/>
    <property type="match status" value="1"/>
</dbReference>
<dbReference type="InterPro" id="IPR001672">
    <property type="entry name" value="G6P_Isomerase"/>
</dbReference>
<dbReference type="InterPro" id="IPR018189">
    <property type="entry name" value="Phosphoglucose_isomerase_CS"/>
</dbReference>
<dbReference type="InterPro" id="IPR046348">
    <property type="entry name" value="SIS_dom_sf"/>
</dbReference>
<dbReference type="InterPro" id="IPR035476">
    <property type="entry name" value="SIS_PGI_1"/>
</dbReference>
<dbReference type="InterPro" id="IPR035482">
    <property type="entry name" value="SIS_PGI_2"/>
</dbReference>
<dbReference type="NCBIfam" id="NF010696">
    <property type="entry name" value="PRK14096.1"/>
    <property type="match status" value="1"/>
</dbReference>
<dbReference type="PANTHER" id="PTHR11469">
    <property type="entry name" value="GLUCOSE-6-PHOSPHATE ISOMERASE"/>
    <property type="match status" value="1"/>
</dbReference>
<dbReference type="PANTHER" id="PTHR11469:SF1">
    <property type="entry name" value="GLUCOSE-6-PHOSPHATE ISOMERASE"/>
    <property type="match status" value="1"/>
</dbReference>
<dbReference type="Pfam" id="PF00342">
    <property type="entry name" value="PGI"/>
    <property type="match status" value="2"/>
</dbReference>
<dbReference type="PRINTS" id="PR00662">
    <property type="entry name" value="G6PISOMERASE"/>
</dbReference>
<dbReference type="SUPFAM" id="SSF53697">
    <property type="entry name" value="SIS domain"/>
    <property type="match status" value="1"/>
</dbReference>
<dbReference type="PROSITE" id="PS00174">
    <property type="entry name" value="P_GLUCOSE_ISOMERASE_2"/>
    <property type="match status" value="1"/>
</dbReference>
<dbReference type="PROSITE" id="PS51463">
    <property type="entry name" value="P_GLUCOSE_ISOMERASE_3"/>
    <property type="match status" value="1"/>
</dbReference>